<dbReference type="EMBL" id="CP000521">
    <property type="protein sequence ID" value="ABO11048.1"/>
    <property type="molecule type" value="Genomic_DNA"/>
</dbReference>
<dbReference type="RefSeq" id="WP_000124858.1">
    <property type="nucleotide sequence ID" value="NZ_CP053098.1"/>
</dbReference>
<dbReference type="SMR" id="A3M2A4"/>
<dbReference type="GeneID" id="9383733"/>
<dbReference type="KEGG" id="acb:A1S_0597"/>
<dbReference type="HOGENOM" id="CLU_123265_0_1_6"/>
<dbReference type="GO" id="GO:1990904">
    <property type="term" value="C:ribonucleoprotein complex"/>
    <property type="evidence" value="ECO:0007669"/>
    <property type="project" value="UniProtKB-KW"/>
</dbReference>
<dbReference type="GO" id="GO:0005840">
    <property type="term" value="C:ribosome"/>
    <property type="evidence" value="ECO:0007669"/>
    <property type="project" value="UniProtKB-KW"/>
</dbReference>
<dbReference type="GO" id="GO:0019843">
    <property type="term" value="F:rRNA binding"/>
    <property type="evidence" value="ECO:0007669"/>
    <property type="project" value="UniProtKB-UniRule"/>
</dbReference>
<dbReference type="GO" id="GO:0003735">
    <property type="term" value="F:structural constituent of ribosome"/>
    <property type="evidence" value="ECO:0007669"/>
    <property type="project" value="InterPro"/>
</dbReference>
<dbReference type="GO" id="GO:0000027">
    <property type="term" value="P:ribosomal large subunit assembly"/>
    <property type="evidence" value="ECO:0007669"/>
    <property type="project" value="UniProtKB-UniRule"/>
</dbReference>
<dbReference type="GO" id="GO:0006412">
    <property type="term" value="P:translation"/>
    <property type="evidence" value="ECO:0007669"/>
    <property type="project" value="InterPro"/>
</dbReference>
<dbReference type="CDD" id="cd07026">
    <property type="entry name" value="Ribosomal_L20"/>
    <property type="match status" value="1"/>
</dbReference>
<dbReference type="FunFam" id="1.10.1900.20:FF:000001">
    <property type="entry name" value="50S ribosomal protein L20"/>
    <property type="match status" value="1"/>
</dbReference>
<dbReference type="Gene3D" id="6.10.160.10">
    <property type="match status" value="1"/>
</dbReference>
<dbReference type="Gene3D" id="1.10.1900.20">
    <property type="entry name" value="Ribosomal protein L20"/>
    <property type="match status" value="1"/>
</dbReference>
<dbReference type="HAMAP" id="MF_00382">
    <property type="entry name" value="Ribosomal_bL20"/>
    <property type="match status" value="1"/>
</dbReference>
<dbReference type="InterPro" id="IPR005813">
    <property type="entry name" value="Ribosomal_bL20"/>
</dbReference>
<dbReference type="InterPro" id="IPR049946">
    <property type="entry name" value="RIBOSOMAL_L20_CS"/>
</dbReference>
<dbReference type="InterPro" id="IPR035566">
    <property type="entry name" value="Ribosomal_protein_bL20_C"/>
</dbReference>
<dbReference type="NCBIfam" id="TIGR01032">
    <property type="entry name" value="rplT_bact"/>
    <property type="match status" value="1"/>
</dbReference>
<dbReference type="PANTHER" id="PTHR10986">
    <property type="entry name" value="39S RIBOSOMAL PROTEIN L20"/>
    <property type="match status" value="1"/>
</dbReference>
<dbReference type="Pfam" id="PF00453">
    <property type="entry name" value="Ribosomal_L20"/>
    <property type="match status" value="1"/>
</dbReference>
<dbReference type="PRINTS" id="PR00062">
    <property type="entry name" value="RIBOSOMALL20"/>
</dbReference>
<dbReference type="SUPFAM" id="SSF74731">
    <property type="entry name" value="Ribosomal protein L20"/>
    <property type="match status" value="1"/>
</dbReference>
<dbReference type="PROSITE" id="PS00937">
    <property type="entry name" value="RIBOSOMAL_L20"/>
    <property type="match status" value="1"/>
</dbReference>
<proteinExistence type="inferred from homology"/>
<gene>
    <name evidence="1" type="primary">rplT</name>
    <name type="ordered locus">A1S_0597</name>
</gene>
<evidence type="ECO:0000255" key="1">
    <source>
        <dbReference type="HAMAP-Rule" id="MF_00382"/>
    </source>
</evidence>
<evidence type="ECO:0000305" key="2"/>
<reference key="1">
    <citation type="journal article" date="2007" name="Genes Dev.">
        <title>New insights into Acinetobacter baumannii pathogenesis revealed by high-density pyrosequencing and transposon mutagenesis.</title>
        <authorList>
            <person name="Smith M.G."/>
            <person name="Gianoulis T.A."/>
            <person name="Pukatzki S."/>
            <person name="Mekalanos J.J."/>
            <person name="Ornston L.N."/>
            <person name="Gerstein M."/>
            <person name="Snyder M."/>
        </authorList>
    </citation>
    <scope>NUCLEOTIDE SEQUENCE [LARGE SCALE GENOMIC DNA]</scope>
    <source>
        <strain>ATCC 17978 / DSM 105126 / CIP 53.77 / LMG 1025 / NCDC KC755 / 5377</strain>
    </source>
</reference>
<protein>
    <recommendedName>
        <fullName evidence="1">Large ribosomal subunit protein bL20</fullName>
    </recommendedName>
    <alternativeName>
        <fullName evidence="2">50S ribosomal protein L20</fullName>
    </alternativeName>
</protein>
<keyword id="KW-0687">Ribonucleoprotein</keyword>
<keyword id="KW-0689">Ribosomal protein</keyword>
<keyword id="KW-0694">RNA-binding</keyword>
<keyword id="KW-0699">rRNA-binding</keyword>
<comment type="function">
    <text evidence="1">Binds directly to 23S ribosomal RNA and is necessary for the in vitro assembly process of the 50S ribosomal subunit. It is not involved in the protein synthesizing functions of that subunit.</text>
</comment>
<comment type="similarity">
    <text evidence="1">Belongs to the bacterial ribosomal protein bL20 family.</text>
</comment>
<feature type="chain" id="PRO_1000048915" description="Large ribosomal subunit protein bL20">
    <location>
        <begin position="1"/>
        <end position="119"/>
    </location>
</feature>
<name>RL20_ACIBT</name>
<organism>
    <name type="scientific">Acinetobacter baumannii (strain ATCC 17978 / DSM 105126 / CIP 53.77 / LMG 1025 / NCDC KC755 / 5377)</name>
    <dbReference type="NCBI Taxonomy" id="400667"/>
    <lineage>
        <taxon>Bacteria</taxon>
        <taxon>Pseudomonadati</taxon>
        <taxon>Pseudomonadota</taxon>
        <taxon>Gammaproteobacteria</taxon>
        <taxon>Moraxellales</taxon>
        <taxon>Moraxellaceae</taxon>
        <taxon>Acinetobacter</taxon>
        <taxon>Acinetobacter calcoaceticus/baumannii complex</taxon>
    </lineage>
</organism>
<sequence>MARVKRGVVAHRRHKKILARAKGYYGARSRVYRVAFQAVIKAGQYAYRDRRQKKRQFRALWIARINAGARQNGLSYSRMIDGLKKAQVIIDRRVLADIAMHDAVAFAALAEKAKGALAA</sequence>
<accession>A3M2A4</accession>